<reference key="1">
    <citation type="journal article" date="1996" name="Mol. Biol. Evol.">
        <title>Internal eliminated sequences interrupting the Oxytricha 81 locus: allelic divergence, conservation, conversions, and possible transposon origins.</title>
        <authorList>
            <person name="Seegmiller A."/>
            <person name="Williams K.R."/>
            <person name="Hammersmith R.L."/>
            <person name="Doak T.G."/>
            <person name="Witherspoon D."/>
            <person name="Messick T."/>
            <person name="Storjohann L.L."/>
            <person name="Herrick G."/>
        </authorList>
    </citation>
    <scope>NUCLEOTIDE SEQUENCE [GENOMIC DNA]</scope>
    <scope>SEQUENCE REVISION TO 74-86</scope>
</reference>
<reference key="2">
    <citation type="journal article" date="1987" name="Genes Dev.">
        <title>Alternative processing during development of a macronuclear chromosome family in Oxytricha fallax.</title>
        <authorList>
            <person name="Herrick G."/>
            <person name="Hunter D."/>
            <person name="Williams K."/>
            <person name="Kotter K."/>
        </authorList>
    </citation>
    <scope>NUCLEOTIDE SEQUENCE [GENOMIC DNA] OF 74-371</scope>
</reference>
<organism>
    <name type="scientific">Oxytricha fallax</name>
    <dbReference type="NCBI Taxonomy" id="5944"/>
    <lineage>
        <taxon>Eukaryota</taxon>
        <taxon>Sar</taxon>
        <taxon>Alveolata</taxon>
        <taxon>Ciliophora</taxon>
        <taxon>Intramacronucleata</taxon>
        <taxon>Spirotrichea</taxon>
        <taxon>Stichotrichia</taxon>
        <taxon>Sporadotrichida</taxon>
        <taxon>Oxytrichidae</taxon>
        <taxon>Oxytrichinae</taxon>
        <taxon>Oxytricha</taxon>
    </lineage>
</organism>
<feature type="chain" id="PRO_0000090709" description="Macronuclear solute carrier homolog CR-MSC">
    <location>
        <begin position="1"/>
        <end position="371"/>
    </location>
</feature>
<feature type="transmembrane region" description="Helical; Name=1" evidence="1">
    <location>
        <begin position="22"/>
        <end position="42"/>
    </location>
</feature>
<feature type="transmembrane region" description="Helical; Name=2" evidence="1">
    <location>
        <begin position="89"/>
        <end position="109"/>
    </location>
</feature>
<feature type="transmembrane region" description="Helical; Name=3" evidence="1">
    <location>
        <begin position="126"/>
        <end position="146"/>
    </location>
</feature>
<feature type="transmembrane region" description="Helical; Name=4" evidence="1">
    <location>
        <begin position="184"/>
        <end position="204"/>
    </location>
</feature>
<feature type="transmembrane region" description="Helical; Name=5" evidence="1">
    <location>
        <begin position="221"/>
        <end position="241"/>
    </location>
</feature>
<feature type="transmembrane region" description="Helical; Name=6" evidence="1">
    <location>
        <begin position="281"/>
        <end position="301"/>
    </location>
</feature>
<feature type="repeat" description="Solcar 1">
    <location>
        <begin position="16"/>
        <end position="111"/>
    </location>
</feature>
<feature type="repeat" description="Solcar 2">
    <location>
        <begin position="120"/>
        <end position="208"/>
    </location>
</feature>
<feature type="repeat" description="Solcar 3">
    <location>
        <begin position="215"/>
        <end position="304"/>
    </location>
</feature>
<protein>
    <recommendedName>
        <fullName>Macronuclear solute carrier homolog CR-MSC</fullName>
    </recommendedName>
</protein>
<accession>P15798</accession>
<accession>O02506</accession>
<accession>O02594</accession>
<accession>Q94631</accession>
<evidence type="ECO:0000255" key="1"/>
<evidence type="ECO:0000305" key="2"/>
<sequence>MPTQMEVEYWRRRYQRMNYERFAAANVIALITHAATQPLDMVRIRSQMLQEGKTFSGLGYQKGWYPFQIMEEIYAAGGGLRKFYSAFDTFFFRTVCYTTARVTAFGYFYDKVNKDPRRVARPDFLVAAGVLGGFIAGVVTNPIDIVYNRMQVDELYPQAARRNYSNTIQGLAKVAEEGALFRGAGANGFKLAAICSSMTNIYDWCKENSYFFFGPHWINRLWGTAVAVAIGTVVSMPFDMIRTRLHTMRPLPNGQMPYNGMIDCFNKIIKYECNSKWMSNFGSFYAGGEAYFLRLFLICYLSQFLVDYYNENYYDQEFWQPQRFHYQSGIDYDIHDPYTDAFNKKLVATYTTATGGMGAAHPSGKENLAII</sequence>
<proteinExistence type="inferred from homology"/>
<keyword id="KW-0472">Membrane</keyword>
<keyword id="KW-0677">Repeat</keyword>
<keyword id="KW-0812">Transmembrane</keyword>
<keyword id="KW-1133">Transmembrane helix</keyword>
<keyword id="KW-0813">Transport</keyword>
<comment type="subcellular location">
    <subcellularLocation>
        <location evidence="2">Membrane</location>
        <topology evidence="2">Multi-pass membrane protein</topology>
    </subcellularLocation>
</comment>
<comment type="similarity">
    <text evidence="2">Belongs to the mitochondrial carrier (TC 2.A.29) family.</text>
</comment>
<dbReference type="EMBL" id="U81495">
    <property type="protein sequence ID" value="AAB61089.1"/>
    <property type="molecule type" value="Genomic_DNA"/>
</dbReference>
<dbReference type="PIR" id="A28260">
    <property type="entry name" value="A28260"/>
</dbReference>
<dbReference type="PIR" id="T18558">
    <property type="entry name" value="T18558"/>
</dbReference>
<dbReference type="SMR" id="P15798"/>
<dbReference type="GO" id="GO:0016020">
    <property type="term" value="C:membrane"/>
    <property type="evidence" value="ECO:0007669"/>
    <property type="project" value="UniProtKB-SubCell"/>
</dbReference>
<dbReference type="Gene3D" id="1.50.40.10">
    <property type="entry name" value="Mitochondrial carrier domain"/>
    <property type="match status" value="1"/>
</dbReference>
<dbReference type="InterPro" id="IPR050391">
    <property type="entry name" value="Mito_Metabolite_Transporter"/>
</dbReference>
<dbReference type="InterPro" id="IPR018108">
    <property type="entry name" value="Mitochondrial_sb/sol_carrier"/>
</dbReference>
<dbReference type="InterPro" id="IPR023395">
    <property type="entry name" value="Mt_carrier_dom_sf"/>
</dbReference>
<dbReference type="PANTHER" id="PTHR45618">
    <property type="entry name" value="MITOCHONDRIAL DICARBOXYLATE CARRIER-RELATED"/>
    <property type="match status" value="1"/>
</dbReference>
<dbReference type="Pfam" id="PF00153">
    <property type="entry name" value="Mito_carr"/>
    <property type="match status" value="3"/>
</dbReference>
<dbReference type="SUPFAM" id="SSF103506">
    <property type="entry name" value="Mitochondrial carrier"/>
    <property type="match status" value="1"/>
</dbReference>
<dbReference type="PROSITE" id="PS50920">
    <property type="entry name" value="SOLCAR"/>
    <property type="match status" value="3"/>
</dbReference>
<name>MNCP_OXYFA</name>